<comment type="function">
    <text evidence="1">Required for the calcium-dependent exocytosis of signal sequence-containing cytokines. Probably acts in cooperation with the SNARE machinery (By similarity).</text>
</comment>
<comment type="subcellular location">
    <subcellularLocation>
        <location evidence="1">Cell membrane</location>
        <topology evidence="1">Multi-pass membrane protein</topology>
    </subcellularLocation>
    <subcellularLocation>
        <location evidence="1">Golgi apparatus membrane</location>
        <topology evidence="1">Multi-pass membrane protein</topology>
    </subcellularLocation>
    <subcellularLocation>
        <location evidence="1">Golgi apparatus</location>
        <location evidence="1">trans-Golgi network membrane</location>
        <topology evidence="1">Multi-pass membrane protein</topology>
    </subcellularLocation>
    <subcellularLocation>
        <location evidence="1">Recycling endosome membrane</location>
        <topology evidence="1">Multi-pass membrane protein</topology>
    </subcellularLocation>
    <subcellularLocation>
        <location evidence="1">Cytoplasmic vesicle</location>
        <location evidence="1">Secretory vesicle</location>
        <location evidence="1">Synaptic vesicle membrane</location>
        <topology evidence="1">Multi-pass membrane protein</topology>
    </subcellularLocation>
    <text evidence="1">Mainly localizes in Golgi apparatus membrane. Upon calcium-triggered exocytosis, it translocates to the cell membrane. Highly enriched in synaptic vesicles (By similarity).</text>
</comment>
<comment type="similarity">
    <text evidence="3">Belongs to the SCAMP family. SCAMP5 subfamily.</text>
</comment>
<protein>
    <recommendedName>
        <fullName>Secretory carrier-associated membrane protein 5</fullName>
        <shortName>Secretory carrier membrane protein 5</shortName>
    </recommendedName>
</protein>
<keyword id="KW-1003">Cell membrane</keyword>
<keyword id="KW-0968">Cytoplasmic vesicle</keyword>
<keyword id="KW-0967">Endosome</keyword>
<keyword id="KW-0268">Exocytosis</keyword>
<keyword id="KW-0333">Golgi apparatus</keyword>
<keyword id="KW-0472">Membrane</keyword>
<keyword id="KW-0653">Protein transport</keyword>
<keyword id="KW-1185">Reference proteome</keyword>
<keyword id="KW-0770">Synapse</keyword>
<keyword id="KW-0812">Transmembrane</keyword>
<keyword id="KW-1133">Transmembrane helix</keyword>
<keyword id="KW-0813">Transport</keyword>
<reference key="1">
    <citation type="submission" date="2004-01" db="EMBL/GenBank/DDBJ databases">
        <authorList>
            <consortium name="NIH - Zebrafish Gene Collection (ZGC) project"/>
        </authorList>
    </citation>
    <scope>NUCLEOTIDE SEQUENCE [LARGE SCALE MRNA]</scope>
    <source>
        <tissue>Embryo</tissue>
    </source>
</reference>
<feature type="chain" id="PRO_0000370554" description="Secretory carrier-associated membrane protein 5">
    <location>
        <begin position="1"/>
        <end position="230"/>
    </location>
</feature>
<feature type="topological domain" description="Cytoplasmic" evidence="2">
    <location>
        <begin position="1"/>
        <end position="36"/>
    </location>
</feature>
<feature type="transmembrane region" description="Helical" evidence="2">
    <location>
        <begin position="37"/>
        <end position="57"/>
    </location>
</feature>
<feature type="topological domain" description="Extracellular" evidence="2">
    <location>
        <begin position="58"/>
        <end position="64"/>
    </location>
</feature>
<feature type="transmembrane region" description="Helical" evidence="2">
    <location>
        <begin position="65"/>
        <end position="85"/>
    </location>
</feature>
<feature type="topological domain" description="Cytoplasmic" evidence="2">
    <location>
        <begin position="86"/>
        <end position="99"/>
    </location>
</feature>
<feature type="transmembrane region" description="Helical" evidence="2">
    <location>
        <begin position="100"/>
        <end position="122"/>
    </location>
</feature>
<feature type="topological domain" description="Extracellular" evidence="2">
    <location>
        <begin position="123"/>
        <end position="145"/>
    </location>
</feature>
<feature type="transmembrane region" description="Helical" evidence="2">
    <location>
        <begin position="146"/>
        <end position="166"/>
    </location>
</feature>
<feature type="topological domain" description="Cytoplasmic" evidence="2">
    <location>
        <begin position="167"/>
        <end position="230"/>
    </location>
</feature>
<accession>Q6P0C7</accession>
<dbReference type="EMBL" id="BC065670">
    <property type="protein sequence ID" value="AAH65670.1"/>
    <property type="molecule type" value="mRNA"/>
</dbReference>
<dbReference type="RefSeq" id="NP_991110.1">
    <property type="nucleotide sequence ID" value="NM_205547.1"/>
</dbReference>
<dbReference type="SMR" id="Q6P0C7"/>
<dbReference type="FunCoup" id="Q6P0C7">
    <property type="interactions" value="340"/>
</dbReference>
<dbReference type="STRING" id="7955.ENSDARP00000031172"/>
<dbReference type="PaxDb" id="7955-ENSDARP00000031172"/>
<dbReference type="Ensembl" id="ENSDART00000028338">
    <property type="protein sequence ID" value="ENSDARP00000031172"/>
    <property type="gene ID" value="ENSDARG00000018743"/>
</dbReference>
<dbReference type="GeneID" id="324467"/>
<dbReference type="KEGG" id="dre:324467"/>
<dbReference type="AGR" id="ZFIN:ZDB-GENE-030131-3188"/>
<dbReference type="CTD" id="324467"/>
<dbReference type="ZFIN" id="ZDB-GENE-030131-3188">
    <property type="gene designation" value="scamp5a"/>
</dbReference>
<dbReference type="eggNOG" id="KOG3088">
    <property type="taxonomic scope" value="Eukaryota"/>
</dbReference>
<dbReference type="HOGENOM" id="CLU_066546_1_0_1"/>
<dbReference type="InParanoid" id="Q6P0C7"/>
<dbReference type="OMA" id="VQFFVFY"/>
<dbReference type="OrthoDB" id="242866at2759"/>
<dbReference type="PhylomeDB" id="Q6P0C7"/>
<dbReference type="TreeFam" id="TF313797"/>
<dbReference type="PRO" id="PR:Q6P0C7"/>
<dbReference type="Proteomes" id="UP000000437">
    <property type="component" value="Chromosome 25"/>
</dbReference>
<dbReference type="Bgee" id="ENSDARG00000018743">
    <property type="expression patterns" value="Expressed in brain and 21 other cell types or tissues"/>
</dbReference>
<dbReference type="GO" id="GO:0000139">
    <property type="term" value="C:Golgi membrane"/>
    <property type="evidence" value="ECO:0000250"/>
    <property type="project" value="UniProtKB"/>
</dbReference>
<dbReference type="GO" id="GO:0005886">
    <property type="term" value="C:plasma membrane"/>
    <property type="evidence" value="ECO:0000250"/>
    <property type="project" value="UniProtKB"/>
</dbReference>
<dbReference type="GO" id="GO:0055038">
    <property type="term" value="C:recycling endosome membrane"/>
    <property type="evidence" value="ECO:0000318"/>
    <property type="project" value="GO_Central"/>
</dbReference>
<dbReference type="GO" id="GO:0030672">
    <property type="term" value="C:synaptic vesicle membrane"/>
    <property type="evidence" value="ECO:0007669"/>
    <property type="project" value="UniProtKB-SubCell"/>
</dbReference>
<dbReference type="GO" id="GO:0032588">
    <property type="term" value="C:trans-Golgi network membrane"/>
    <property type="evidence" value="ECO:0000318"/>
    <property type="project" value="GO_Central"/>
</dbReference>
<dbReference type="GO" id="GO:0006887">
    <property type="term" value="P:exocytosis"/>
    <property type="evidence" value="ECO:0007669"/>
    <property type="project" value="UniProtKB-KW"/>
</dbReference>
<dbReference type="GO" id="GO:0045956">
    <property type="term" value="P:positive regulation of calcium ion-dependent exocytosis"/>
    <property type="evidence" value="ECO:0000250"/>
    <property type="project" value="UniProtKB"/>
</dbReference>
<dbReference type="GO" id="GO:0001819">
    <property type="term" value="P:positive regulation of cytokine production"/>
    <property type="evidence" value="ECO:0000250"/>
    <property type="project" value="UniProtKB"/>
</dbReference>
<dbReference type="GO" id="GO:0015031">
    <property type="term" value="P:protein transport"/>
    <property type="evidence" value="ECO:0000318"/>
    <property type="project" value="GO_Central"/>
</dbReference>
<dbReference type="InterPro" id="IPR007273">
    <property type="entry name" value="SCAMP"/>
</dbReference>
<dbReference type="PANTHER" id="PTHR10687:SF5">
    <property type="entry name" value="SECRETORY CARRIER-ASSOCIATED MEMBRANE PROTEIN 5"/>
    <property type="match status" value="1"/>
</dbReference>
<dbReference type="PANTHER" id="PTHR10687">
    <property type="entry name" value="SECRETORY CARRIER-ASSOCIATED MEMBRANE PROTEIN SCAMP"/>
    <property type="match status" value="1"/>
</dbReference>
<dbReference type="Pfam" id="PF04144">
    <property type="entry name" value="SCAMP"/>
    <property type="match status" value="1"/>
</dbReference>
<evidence type="ECO:0000250" key="1"/>
<evidence type="ECO:0000255" key="2"/>
<evidence type="ECO:0000305" key="3"/>
<proteinExistence type="evidence at transcript level"/>
<organism>
    <name type="scientific">Danio rerio</name>
    <name type="common">Zebrafish</name>
    <name type="synonym">Brachydanio rerio</name>
    <dbReference type="NCBI Taxonomy" id="7955"/>
    <lineage>
        <taxon>Eukaryota</taxon>
        <taxon>Metazoa</taxon>
        <taxon>Chordata</taxon>
        <taxon>Craniata</taxon>
        <taxon>Vertebrata</taxon>
        <taxon>Euteleostomi</taxon>
        <taxon>Actinopterygii</taxon>
        <taxon>Neopterygii</taxon>
        <taxon>Teleostei</taxon>
        <taxon>Ostariophysi</taxon>
        <taxon>Cypriniformes</taxon>
        <taxon>Danionidae</taxon>
        <taxon>Danioninae</taxon>
        <taxon>Danio</taxon>
    </lineage>
</organism>
<gene>
    <name type="primary">scamp5</name>
</gene>
<name>SCAM5_DANRE</name>
<sequence>MAENNFPPLPRFIPLKPCFYQDFNEIPDQHRTMCKRLYYLWILNSATLAVNLIGCLAWMCGGGGATNFGMAILWLILFTPCSYVCWFRPIYKAFKSDSSFNFMAFFFVFMAQVVISIIQTVGIPGWGVCGWLATITFFSTNIGSAVVMLIPTIMFTAVAVLSFIALTKVHNFYRGSGGSMSKAQEEWTSGAWKNPHVQQAAQQAAMGAAQGAMQGQQYSAAPTYNYDDPM</sequence>